<keyword id="KW-0004">4Fe-4S</keyword>
<keyword id="KW-1003">Cell membrane</keyword>
<keyword id="KW-0408">Iron</keyword>
<keyword id="KW-0411">Iron-sulfur</keyword>
<keyword id="KW-0472">Membrane</keyword>
<keyword id="KW-0479">Metal-binding</keyword>
<keyword id="KW-0520">NAD</keyword>
<keyword id="KW-0874">Quinone</keyword>
<keyword id="KW-1185">Reference proteome</keyword>
<keyword id="KW-1278">Translocase</keyword>
<keyword id="KW-0813">Transport</keyword>
<reference key="1">
    <citation type="journal article" date="2009" name="Stand. Genomic Sci.">
        <title>Complete genome sequence of Beutenbergia cavernae type strain (HKI 0122).</title>
        <authorList>
            <person name="Land M."/>
            <person name="Pukall R."/>
            <person name="Abt B."/>
            <person name="Goker M."/>
            <person name="Rohde M."/>
            <person name="Glavina Del Rio T."/>
            <person name="Tice H."/>
            <person name="Copeland A."/>
            <person name="Cheng J.F."/>
            <person name="Lucas S."/>
            <person name="Chen F."/>
            <person name="Nolan M."/>
            <person name="Bruce D."/>
            <person name="Goodwin L."/>
            <person name="Pitluck S."/>
            <person name="Ivanova N."/>
            <person name="Mavromatis K."/>
            <person name="Ovchinnikova G."/>
            <person name="Pati A."/>
            <person name="Chen A."/>
            <person name="Palaniappan K."/>
            <person name="Hauser L."/>
            <person name="Chang Y.J."/>
            <person name="Jefferies C.C."/>
            <person name="Saunders E."/>
            <person name="Brettin T."/>
            <person name="Detter J.C."/>
            <person name="Han C."/>
            <person name="Chain P."/>
            <person name="Bristow J."/>
            <person name="Eisen J.A."/>
            <person name="Markowitz V."/>
            <person name="Hugenholtz P."/>
            <person name="Kyrpides N.C."/>
            <person name="Klenk H.P."/>
            <person name="Lapidus A."/>
        </authorList>
    </citation>
    <scope>NUCLEOTIDE SEQUENCE [LARGE SCALE GENOMIC DNA]</scope>
    <source>
        <strain>ATCC BAA-8 / DSM 12333 / CCUG 43141 / JCM 11478 / NBRC 16432 / NCIMB 13614 / HKI 0122</strain>
    </source>
</reference>
<name>NUOB_BEUC1</name>
<comment type="function">
    <text evidence="1">NDH-1 shuttles electrons from NADH, via FMN and iron-sulfur (Fe-S) centers, to quinones in the respiratory chain. The immediate electron acceptor for the enzyme in this species is believed to be a menaquinone. Couples the redox reaction to proton translocation (for every two electrons transferred, four hydrogen ions are translocated across the cytoplasmic membrane), and thus conserves the redox energy in a proton gradient.</text>
</comment>
<comment type="catalytic activity">
    <reaction evidence="1">
        <text>a quinone + NADH + 5 H(+)(in) = a quinol + NAD(+) + 4 H(+)(out)</text>
        <dbReference type="Rhea" id="RHEA:57888"/>
        <dbReference type="ChEBI" id="CHEBI:15378"/>
        <dbReference type="ChEBI" id="CHEBI:24646"/>
        <dbReference type="ChEBI" id="CHEBI:57540"/>
        <dbReference type="ChEBI" id="CHEBI:57945"/>
        <dbReference type="ChEBI" id="CHEBI:132124"/>
    </reaction>
</comment>
<comment type="cofactor">
    <cofactor evidence="1">
        <name>[4Fe-4S] cluster</name>
        <dbReference type="ChEBI" id="CHEBI:49883"/>
    </cofactor>
    <text evidence="1">Binds 1 [4Fe-4S] cluster.</text>
</comment>
<comment type="subunit">
    <text evidence="1">NDH-1 is composed of 14 different subunits. Subunits NuoB, C, D, E, F, and G constitute the peripheral sector of the complex.</text>
</comment>
<comment type="subcellular location">
    <subcellularLocation>
        <location evidence="1">Cell membrane</location>
        <topology evidence="1">Peripheral membrane protein</topology>
        <orientation evidence="1">Cytoplasmic side</orientation>
    </subcellularLocation>
</comment>
<comment type="similarity">
    <text evidence="1">Belongs to the complex I 20 kDa subunit family.</text>
</comment>
<accession>C5C0S6</accession>
<evidence type="ECO:0000255" key="1">
    <source>
        <dbReference type="HAMAP-Rule" id="MF_01356"/>
    </source>
</evidence>
<protein>
    <recommendedName>
        <fullName evidence="1">NADH-quinone oxidoreductase subunit B</fullName>
        <ecNumber evidence="1">7.1.1.-</ecNumber>
    </recommendedName>
    <alternativeName>
        <fullName evidence="1">NADH dehydrogenase I subunit B</fullName>
    </alternativeName>
    <alternativeName>
        <fullName evidence="1">NDH-1 subunit B</fullName>
    </alternativeName>
</protein>
<gene>
    <name evidence="1" type="primary">nuoB</name>
    <name type="ordered locus">Bcav_3228</name>
</gene>
<organism>
    <name type="scientific">Beutenbergia cavernae (strain ATCC BAA-8 / DSM 12333 / CCUG 43141 / JCM 11478 / NBRC 16432 / NCIMB 13614 / HKI 0122)</name>
    <dbReference type="NCBI Taxonomy" id="471853"/>
    <lineage>
        <taxon>Bacteria</taxon>
        <taxon>Bacillati</taxon>
        <taxon>Actinomycetota</taxon>
        <taxon>Actinomycetes</taxon>
        <taxon>Micrococcales</taxon>
        <taxon>Beutenbergiaceae</taxon>
        <taxon>Beutenbergia</taxon>
    </lineage>
</organism>
<dbReference type="EC" id="7.1.1.-" evidence="1"/>
<dbReference type="EMBL" id="CP001618">
    <property type="protein sequence ID" value="ACQ81472.1"/>
    <property type="molecule type" value="Genomic_DNA"/>
</dbReference>
<dbReference type="RefSeq" id="WP_015883710.1">
    <property type="nucleotide sequence ID" value="NC_012669.1"/>
</dbReference>
<dbReference type="SMR" id="C5C0S6"/>
<dbReference type="STRING" id="471853.Bcav_3228"/>
<dbReference type="KEGG" id="bcv:Bcav_3228"/>
<dbReference type="eggNOG" id="COG0377">
    <property type="taxonomic scope" value="Bacteria"/>
</dbReference>
<dbReference type="HOGENOM" id="CLU_055737_7_3_11"/>
<dbReference type="OrthoDB" id="9786737at2"/>
<dbReference type="Proteomes" id="UP000007962">
    <property type="component" value="Chromosome"/>
</dbReference>
<dbReference type="GO" id="GO:0005886">
    <property type="term" value="C:plasma membrane"/>
    <property type="evidence" value="ECO:0007669"/>
    <property type="project" value="UniProtKB-SubCell"/>
</dbReference>
<dbReference type="GO" id="GO:0045271">
    <property type="term" value="C:respiratory chain complex I"/>
    <property type="evidence" value="ECO:0007669"/>
    <property type="project" value="TreeGrafter"/>
</dbReference>
<dbReference type="GO" id="GO:0051539">
    <property type="term" value="F:4 iron, 4 sulfur cluster binding"/>
    <property type="evidence" value="ECO:0007669"/>
    <property type="project" value="UniProtKB-KW"/>
</dbReference>
<dbReference type="GO" id="GO:0005506">
    <property type="term" value="F:iron ion binding"/>
    <property type="evidence" value="ECO:0007669"/>
    <property type="project" value="UniProtKB-UniRule"/>
</dbReference>
<dbReference type="GO" id="GO:0008137">
    <property type="term" value="F:NADH dehydrogenase (ubiquinone) activity"/>
    <property type="evidence" value="ECO:0007669"/>
    <property type="project" value="InterPro"/>
</dbReference>
<dbReference type="GO" id="GO:0050136">
    <property type="term" value="F:NADH:ubiquinone reductase (non-electrogenic) activity"/>
    <property type="evidence" value="ECO:0007669"/>
    <property type="project" value="UniProtKB-UniRule"/>
</dbReference>
<dbReference type="GO" id="GO:0048038">
    <property type="term" value="F:quinone binding"/>
    <property type="evidence" value="ECO:0007669"/>
    <property type="project" value="UniProtKB-KW"/>
</dbReference>
<dbReference type="GO" id="GO:0009060">
    <property type="term" value="P:aerobic respiration"/>
    <property type="evidence" value="ECO:0007669"/>
    <property type="project" value="TreeGrafter"/>
</dbReference>
<dbReference type="GO" id="GO:0015990">
    <property type="term" value="P:electron transport coupled proton transport"/>
    <property type="evidence" value="ECO:0007669"/>
    <property type="project" value="TreeGrafter"/>
</dbReference>
<dbReference type="FunFam" id="3.40.50.12280:FF:000004">
    <property type="entry name" value="NADH-quinone oxidoreductase subunit B"/>
    <property type="match status" value="1"/>
</dbReference>
<dbReference type="Gene3D" id="3.40.50.12280">
    <property type="match status" value="1"/>
</dbReference>
<dbReference type="HAMAP" id="MF_01356">
    <property type="entry name" value="NDH1_NuoB"/>
    <property type="match status" value="1"/>
</dbReference>
<dbReference type="InterPro" id="IPR006137">
    <property type="entry name" value="NADH_UbQ_OxRdtase-like_20kDa"/>
</dbReference>
<dbReference type="InterPro" id="IPR006138">
    <property type="entry name" value="NADH_UQ_OxRdtase_20Kd_su"/>
</dbReference>
<dbReference type="NCBIfam" id="TIGR01957">
    <property type="entry name" value="nuoB_fam"/>
    <property type="match status" value="1"/>
</dbReference>
<dbReference type="NCBIfam" id="NF005012">
    <property type="entry name" value="PRK06411.1"/>
    <property type="match status" value="1"/>
</dbReference>
<dbReference type="PANTHER" id="PTHR11995">
    <property type="entry name" value="NADH DEHYDROGENASE"/>
    <property type="match status" value="1"/>
</dbReference>
<dbReference type="PANTHER" id="PTHR11995:SF14">
    <property type="entry name" value="NADH DEHYDROGENASE [UBIQUINONE] IRON-SULFUR PROTEIN 7, MITOCHONDRIAL"/>
    <property type="match status" value="1"/>
</dbReference>
<dbReference type="Pfam" id="PF01058">
    <property type="entry name" value="Oxidored_q6"/>
    <property type="match status" value="1"/>
</dbReference>
<dbReference type="SUPFAM" id="SSF56770">
    <property type="entry name" value="HydA/Nqo6-like"/>
    <property type="match status" value="1"/>
</dbReference>
<dbReference type="PROSITE" id="PS01150">
    <property type="entry name" value="COMPLEX1_20K"/>
    <property type="match status" value="1"/>
</dbReference>
<proteinExistence type="inferred from homology"/>
<sequence length="184" mass="19946">MGIEEKAPSGFMLAKVSDLVGLIRKSSLWPVTMGLACCAIEMMATGTPRFDISRFGMEVFRASPRQADLMIVSGRVSQKMAPVVRQVYDQMSEPKWVLSMGVCASSGGMFNNYAVVQGVDHILPVDIYLPGCPPRPEMLLNAILELHEQIRSEPLGANRAEAARAVEAAALRATPTHEMTGLLA</sequence>
<feature type="chain" id="PRO_1000214855" description="NADH-quinone oxidoreductase subunit B">
    <location>
        <begin position="1"/>
        <end position="184"/>
    </location>
</feature>
<feature type="binding site" evidence="1">
    <location>
        <position position="37"/>
    </location>
    <ligand>
        <name>[4Fe-4S] cluster</name>
        <dbReference type="ChEBI" id="CHEBI:49883"/>
    </ligand>
</feature>
<feature type="binding site" evidence="1">
    <location>
        <position position="38"/>
    </location>
    <ligand>
        <name>[4Fe-4S] cluster</name>
        <dbReference type="ChEBI" id="CHEBI:49883"/>
    </ligand>
</feature>
<feature type="binding site" evidence="1">
    <location>
        <position position="103"/>
    </location>
    <ligand>
        <name>[4Fe-4S] cluster</name>
        <dbReference type="ChEBI" id="CHEBI:49883"/>
    </ligand>
</feature>
<feature type="binding site" evidence="1">
    <location>
        <position position="132"/>
    </location>
    <ligand>
        <name>[4Fe-4S] cluster</name>
        <dbReference type="ChEBI" id="CHEBI:49883"/>
    </ligand>
</feature>